<feature type="initiator methionine" description="Removed" evidence="2">
    <location>
        <position position="1"/>
    </location>
</feature>
<feature type="chain" id="PRO_0000399469" description="Protein BONZAI 2">
    <location>
        <begin position="2"/>
        <end position="586"/>
    </location>
</feature>
<feature type="domain" description="C2 1" evidence="3">
    <location>
        <begin position="25"/>
        <end position="164"/>
    </location>
</feature>
<feature type="domain" description="C2 2" evidence="3">
    <location>
        <begin position="176"/>
        <end position="303"/>
    </location>
</feature>
<feature type="domain" description="VWFA" evidence="4">
    <location>
        <begin position="344"/>
        <end position="563"/>
    </location>
</feature>
<feature type="binding site" evidence="3">
    <location>
        <position position="62"/>
    </location>
    <ligand>
        <name>Ca(2+)</name>
        <dbReference type="ChEBI" id="CHEBI:29108"/>
    </ligand>
</feature>
<feature type="binding site" evidence="3">
    <location>
        <position position="68"/>
    </location>
    <ligand>
        <name>Ca(2+)</name>
        <dbReference type="ChEBI" id="CHEBI:29108"/>
    </ligand>
</feature>
<feature type="binding site" evidence="3">
    <location>
        <position position="121"/>
    </location>
    <ligand>
        <name>Ca(2+)</name>
        <dbReference type="ChEBI" id="CHEBI:29108"/>
    </ligand>
</feature>
<feature type="binding site" evidence="3">
    <location>
        <position position="123"/>
    </location>
    <ligand>
        <name>Ca(2+)</name>
        <dbReference type="ChEBI" id="CHEBI:29108"/>
    </ligand>
</feature>
<feature type="lipid moiety-binding region" description="N-myristoyl glycine" evidence="2">
    <location>
        <position position="2"/>
    </location>
</feature>
<feature type="sequence conflict" description="In Ref. 1; AAW65975/AAV66325." evidence="7" ref="1">
    <original>V</original>
    <variation>G</variation>
    <location>
        <position position="184"/>
    </location>
</feature>
<organism>
    <name type="scientific">Arabidopsis thaliana</name>
    <name type="common">Mouse-ear cress</name>
    <dbReference type="NCBI Taxonomy" id="3702"/>
    <lineage>
        <taxon>Eukaryota</taxon>
        <taxon>Viridiplantae</taxon>
        <taxon>Streptophyta</taxon>
        <taxon>Embryophyta</taxon>
        <taxon>Tracheophyta</taxon>
        <taxon>Spermatophyta</taxon>
        <taxon>Magnoliopsida</taxon>
        <taxon>eudicotyledons</taxon>
        <taxon>Gunneridae</taxon>
        <taxon>Pentapetalae</taxon>
        <taxon>rosids</taxon>
        <taxon>malvids</taxon>
        <taxon>Brassicales</taxon>
        <taxon>Brassicaceae</taxon>
        <taxon>Camelineae</taxon>
        <taxon>Arabidopsis</taxon>
    </lineage>
</organism>
<evidence type="ECO:0000250" key="1"/>
<evidence type="ECO:0000255" key="2"/>
<evidence type="ECO:0000255" key="3">
    <source>
        <dbReference type="PROSITE-ProRule" id="PRU00041"/>
    </source>
</evidence>
<evidence type="ECO:0000255" key="4">
    <source>
        <dbReference type="PROSITE-ProRule" id="PRU00219"/>
    </source>
</evidence>
<evidence type="ECO:0000269" key="5">
    <source>
    </source>
</evidence>
<evidence type="ECO:0000269" key="6">
    <source>
    </source>
</evidence>
<evidence type="ECO:0000305" key="7"/>
<name>BON2_ARATH</name>
<protein>
    <recommendedName>
        <fullName>Protein BONZAI 2</fullName>
    </recommendedName>
</protein>
<keyword id="KW-0106">Calcium</keyword>
<keyword id="KW-1003">Cell membrane</keyword>
<keyword id="KW-0449">Lipoprotein</keyword>
<keyword id="KW-0472">Membrane</keyword>
<keyword id="KW-0479">Metal-binding</keyword>
<keyword id="KW-0519">Myristate</keyword>
<keyword id="KW-0611">Plant defense</keyword>
<keyword id="KW-1185">Reference proteome</keyword>
<keyword id="KW-0677">Repeat</keyword>
<comment type="function">
    <text evidence="1 5">Negative regulator of cell death and defense responses. May repress a number of R genes and may have effects in promoting growth and development. May function in membrane trafficking and in fusion of vesicles with plasma membrane (By similarity).</text>
</comment>
<comment type="cofactor">
    <cofactor evidence="3">
        <name>Ca(2+)</name>
        <dbReference type="ChEBI" id="CHEBI:29108"/>
    </cofactor>
</comment>
<comment type="subunit">
    <text evidence="6">Interacts with BAP1 and BAP2.</text>
</comment>
<comment type="interaction">
    <interactant intactId="EBI-1606334">
        <id>Q5S1W2</id>
    </interactant>
    <interactant intactId="EBI-1606302">
        <id>Q941L2</id>
        <label>BAP1</label>
    </interactant>
    <organismsDiffer>false</organismsDiffer>
    <experiments>3</experiments>
</comment>
<comment type="subcellular location">
    <subcellularLocation>
        <location evidence="7">Cell membrane</location>
        <topology evidence="7">Lipid-anchor</topology>
    </subcellularLocation>
</comment>
<comment type="tissue specificity">
    <text evidence="5">Expressed in roots, leaves and stems. Expressed in young growing tissues.</text>
</comment>
<comment type="disruption phenotype">
    <text evidence="5">No visible phenotype; due to partial redundancy with BON1 and BON3. Bon2 and bon3 double mutant has no visible phenotype. Bon1 and bon2 double mutant is seedling-lethal when grown at 22 degrees Celsius. Bon1, bon2 and bon3 triple mutant is seedling-lethal at any temperature.</text>
</comment>
<comment type="similarity">
    <text evidence="7">Belongs to the copine family.</text>
</comment>
<comment type="sequence caution" evidence="7">
    <conflict type="erroneous gene model prediction">
        <sequence resource="EMBL-CDS" id="CAB87919"/>
    </conflict>
</comment>
<accession>Q5S1W2</accession>
<accession>Q94EW4</accession>
<accession>Q9LY30</accession>
<dbReference type="EMBL" id="AY788906">
    <property type="protein sequence ID" value="AAV66325.1"/>
    <property type="molecule type" value="mRNA"/>
</dbReference>
<dbReference type="EMBL" id="AY741135">
    <property type="protein sequence ID" value="AAW65975.1"/>
    <property type="molecule type" value="mRNA"/>
</dbReference>
<dbReference type="EMBL" id="AL163912">
    <property type="protein sequence ID" value="CAB87919.1"/>
    <property type="status" value="ALT_SEQ"/>
    <property type="molecule type" value="Genomic_DNA"/>
</dbReference>
<dbReference type="EMBL" id="CP002688">
    <property type="protein sequence ID" value="AED91134.1"/>
    <property type="molecule type" value="Genomic_DNA"/>
</dbReference>
<dbReference type="EMBL" id="AF389301">
    <property type="protein sequence ID" value="AAK63871.1"/>
    <property type="molecule type" value="mRNA"/>
</dbReference>
<dbReference type="EMBL" id="BT010130">
    <property type="protein sequence ID" value="AAQ22599.1"/>
    <property type="molecule type" value="mRNA"/>
</dbReference>
<dbReference type="PIR" id="T49869">
    <property type="entry name" value="T49869"/>
</dbReference>
<dbReference type="RefSeq" id="NP_568180.1">
    <property type="nucleotide sequence ID" value="NM_120812.4"/>
</dbReference>
<dbReference type="SMR" id="Q5S1W2"/>
<dbReference type="BioGRID" id="15900">
    <property type="interactions" value="3"/>
</dbReference>
<dbReference type="FunCoup" id="Q5S1W2">
    <property type="interactions" value="1287"/>
</dbReference>
<dbReference type="IntAct" id="Q5S1W2">
    <property type="interactions" value="6"/>
</dbReference>
<dbReference type="STRING" id="3702.Q5S1W2"/>
<dbReference type="iPTMnet" id="Q5S1W2"/>
<dbReference type="SwissPalm" id="Q5S1W2"/>
<dbReference type="PaxDb" id="3702-AT5G07300.1"/>
<dbReference type="ProteomicsDB" id="240735"/>
<dbReference type="EnsemblPlants" id="AT5G07300.1">
    <property type="protein sequence ID" value="AT5G07300.1"/>
    <property type="gene ID" value="AT5G07300"/>
</dbReference>
<dbReference type="GeneID" id="830621"/>
<dbReference type="Gramene" id="AT5G07300.1">
    <property type="protein sequence ID" value="AT5G07300.1"/>
    <property type="gene ID" value="AT5G07300"/>
</dbReference>
<dbReference type="KEGG" id="ath:AT5G07300"/>
<dbReference type="Araport" id="AT5G07300"/>
<dbReference type="TAIR" id="AT5G07300">
    <property type="gene designation" value="BON2"/>
</dbReference>
<dbReference type="eggNOG" id="KOG1327">
    <property type="taxonomic scope" value="Eukaryota"/>
</dbReference>
<dbReference type="HOGENOM" id="CLU_020452_3_1_1"/>
<dbReference type="InParanoid" id="Q5S1W2"/>
<dbReference type="OMA" id="LMILVYF"/>
<dbReference type="PhylomeDB" id="Q5S1W2"/>
<dbReference type="PRO" id="PR:Q5S1W2"/>
<dbReference type="Proteomes" id="UP000006548">
    <property type="component" value="Chromosome 5"/>
</dbReference>
<dbReference type="ExpressionAtlas" id="Q5S1W2">
    <property type="expression patterns" value="baseline and differential"/>
</dbReference>
<dbReference type="GO" id="GO:0005886">
    <property type="term" value="C:plasma membrane"/>
    <property type="evidence" value="ECO:0007005"/>
    <property type="project" value="TAIR"/>
</dbReference>
<dbReference type="GO" id="GO:0009506">
    <property type="term" value="C:plasmodesma"/>
    <property type="evidence" value="ECO:0007005"/>
    <property type="project" value="TAIR"/>
</dbReference>
<dbReference type="GO" id="GO:0005544">
    <property type="term" value="F:calcium-dependent phospholipid binding"/>
    <property type="evidence" value="ECO:0007669"/>
    <property type="project" value="InterPro"/>
</dbReference>
<dbReference type="GO" id="GO:0046872">
    <property type="term" value="F:metal ion binding"/>
    <property type="evidence" value="ECO:0007669"/>
    <property type="project" value="UniProtKB-KW"/>
</dbReference>
<dbReference type="GO" id="GO:0006952">
    <property type="term" value="P:defense response"/>
    <property type="evidence" value="ECO:0007669"/>
    <property type="project" value="UniProtKB-KW"/>
</dbReference>
<dbReference type="CDD" id="cd04048">
    <property type="entry name" value="C2A_Copine"/>
    <property type="match status" value="1"/>
</dbReference>
<dbReference type="CDD" id="cd04047">
    <property type="entry name" value="C2B_Copine"/>
    <property type="match status" value="1"/>
</dbReference>
<dbReference type="CDD" id="cd01459">
    <property type="entry name" value="vWA_copine_like"/>
    <property type="match status" value="1"/>
</dbReference>
<dbReference type="FunFam" id="2.60.40.150:FF:000168">
    <property type="entry name" value="Protein BONZAI 1"/>
    <property type="match status" value="1"/>
</dbReference>
<dbReference type="FunFam" id="2.60.40.150:FF:000197">
    <property type="entry name" value="Protein BONZAI 1 isoform A"/>
    <property type="match status" value="1"/>
</dbReference>
<dbReference type="Gene3D" id="2.60.40.150">
    <property type="entry name" value="C2 domain"/>
    <property type="match status" value="2"/>
</dbReference>
<dbReference type="InterPro" id="IPR000008">
    <property type="entry name" value="C2_dom"/>
</dbReference>
<dbReference type="InterPro" id="IPR035892">
    <property type="entry name" value="C2_domain_sf"/>
</dbReference>
<dbReference type="InterPro" id="IPR037768">
    <property type="entry name" value="C2B_Copine"/>
</dbReference>
<dbReference type="InterPro" id="IPR045052">
    <property type="entry name" value="Copine"/>
</dbReference>
<dbReference type="InterPro" id="IPR010734">
    <property type="entry name" value="Copine_C"/>
</dbReference>
<dbReference type="InterPro" id="IPR002035">
    <property type="entry name" value="VWF_A"/>
</dbReference>
<dbReference type="InterPro" id="IPR036465">
    <property type="entry name" value="vWFA_dom_sf"/>
</dbReference>
<dbReference type="PANTHER" id="PTHR10857">
    <property type="entry name" value="COPINE"/>
    <property type="match status" value="1"/>
</dbReference>
<dbReference type="PANTHER" id="PTHR10857:SF134">
    <property type="entry name" value="PROTEIN BONZAI 2"/>
    <property type="match status" value="1"/>
</dbReference>
<dbReference type="Pfam" id="PF00168">
    <property type="entry name" value="C2"/>
    <property type="match status" value="2"/>
</dbReference>
<dbReference type="Pfam" id="PF07002">
    <property type="entry name" value="Copine"/>
    <property type="match status" value="1"/>
</dbReference>
<dbReference type="SMART" id="SM00239">
    <property type="entry name" value="C2"/>
    <property type="match status" value="2"/>
</dbReference>
<dbReference type="SMART" id="SM00327">
    <property type="entry name" value="VWA"/>
    <property type="match status" value="1"/>
</dbReference>
<dbReference type="SUPFAM" id="SSF49562">
    <property type="entry name" value="C2 domain (Calcium/lipid-binding domain, CaLB)"/>
    <property type="match status" value="2"/>
</dbReference>
<dbReference type="SUPFAM" id="SSF53300">
    <property type="entry name" value="vWA-like"/>
    <property type="match status" value="1"/>
</dbReference>
<dbReference type="PROSITE" id="PS50004">
    <property type="entry name" value="C2"/>
    <property type="match status" value="2"/>
</dbReference>
<dbReference type="PROSITE" id="PS50234">
    <property type="entry name" value="VWFA"/>
    <property type="match status" value="1"/>
</dbReference>
<sequence length="586" mass="64033">MGSCWSDGSYAGGGMVGVGGGANSSAATPNDAVDYYLKSRGYNGLFSQIELSFSASNLRDRDVISKSDAMVVVYTKGRDGTLAELFRSEVVLNSLNPKWIKNFTIGYQFEIVQTLLFRVYDIDTQFQNSKEELLKLDEQQFLGEATCTLSEVVTKSNRTIALELMRKEGVAAQTQPQHNGKLIVHAEESLASKTNTEIVFRGLNLESKDTFSKSDPFLVISKIVEHGTPIPVSKTEVLKNDPNPLWKPVSLSVQQVGSKDSPLVIECLDFNGNGNHDLIGKVQKSLSDLEKLHLAGQGINLALPTGVGHKHEDRVLKSQLFVDKFTETVQHTFLEYLASGFELNFMVAIDFTASNGNPRLPDSLHYIDPTGRLNAYQRAIVEVGEVLQFYDSDKRFPAWGFGARPIDIPVSHCFNLNGSSTYCEVDGIQGIMNAYNGALFNVSFAGPTLFGPVINAAATIASDSLAQSAKKYYVLLIITDGVITDLQETRDSIVSASDLPLSILIVGVGGADYKEMEVLDGDKGEKLESSSGRIASRDIVQFVALRDIQYGEVSVVEALLAELPTQFLTYMRNRNITPTTTTPSST</sequence>
<gene>
    <name type="primary">BON2</name>
    <name type="ordered locus">At5g07300</name>
    <name type="ORF">T2I1.10</name>
</gene>
<proteinExistence type="evidence at protein level"/>
<reference key="1">
    <citation type="journal article" date="2006" name="Plant J.">
        <title>The BON/CPN gene family represses cell death and promotes cell growth in Arabidopsis.</title>
        <authorList>
            <person name="Yang S."/>
            <person name="Yang H."/>
            <person name="Grisafi P."/>
            <person name="Sanchatjate S."/>
            <person name="Fink G.R."/>
            <person name="Sun Q."/>
            <person name="Hua J."/>
        </authorList>
    </citation>
    <scope>NUCLEOTIDE SEQUENCE [MRNA]</scope>
    <scope>FUNCTION</scope>
    <scope>DISRUPTION PHENOTYPE</scope>
    <scope>TISSUE SPECIFICITY</scope>
    <scope>GENE FAMILY</scope>
    <scope>NOMENCLATURE</scope>
</reference>
<reference key="2">
    <citation type="journal article" date="2000" name="Nature">
        <title>Sequence and analysis of chromosome 5 of the plant Arabidopsis thaliana.</title>
        <authorList>
            <person name="Tabata S."/>
            <person name="Kaneko T."/>
            <person name="Nakamura Y."/>
            <person name="Kotani H."/>
            <person name="Kato T."/>
            <person name="Asamizu E."/>
            <person name="Miyajima N."/>
            <person name="Sasamoto S."/>
            <person name="Kimura T."/>
            <person name="Hosouchi T."/>
            <person name="Kawashima K."/>
            <person name="Kohara M."/>
            <person name="Matsumoto M."/>
            <person name="Matsuno A."/>
            <person name="Muraki A."/>
            <person name="Nakayama S."/>
            <person name="Nakazaki N."/>
            <person name="Naruo K."/>
            <person name="Okumura S."/>
            <person name="Shinpo S."/>
            <person name="Takeuchi C."/>
            <person name="Wada T."/>
            <person name="Watanabe A."/>
            <person name="Yamada M."/>
            <person name="Yasuda M."/>
            <person name="Sato S."/>
            <person name="de la Bastide M."/>
            <person name="Huang E."/>
            <person name="Spiegel L."/>
            <person name="Gnoj L."/>
            <person name="O'Shaughnessy A."/>
            <person name="Preston R."/>
            <person name="Habermann K."/>
            <person name="Murray J."/>
            <person name="Johnson D."/>
            <person name="Rohlfing T."/>
            <person name="Nelson J."/>
            <person name="Stoneking T."/>
            <person name="Pepin K."/>
            <person name="Spieth J."/>
            <person name="Sekhon M."/>
            <person name="Armstrong J."/>
            <person name="Becker M."/>
            <person name="Belter E."/>
            <person name="Cordum H."/>
            <person name="Cordes M."/>
            <person name="Courtney L."/>
            <person name="Courtney W."/>
            <person name="Dante M."/>
            <person name="Du H."/>
            <person name="Edwards J."/>
            <person name="Fryman J."/>
            <person name="Haakensen B."/>
            <person name="Lamar E."/>
            <person name="Latreille P."/>
            <person name="Leonard S."/>
            <person name="Meyer R."/>
            <person name="Mulvaney E."/>
            <person name="Ozersky P."/>
            <person name="Riley A."/>
            <person name="Strowmatt C."/>
            <person name="Wagner-McPherson C."/>
            <person name="Wollam A."/>
            <person name="Yoakum M."/>
            <person name="Bell M."/>
            <person name="Dedhia N."/>
            <person name="Parnell L."/>
            <person name="Shah R."/>
            <person name="Rodriguez M."/>
            <person name="Hoon See L."/>
            <person name="Vil D."/>
            <person name="Baker J."/>
            <person name="Kirchoff K."/>
            <person name="Toth K."/>
            <person name="King L."/>
            <person name="Bahret A."/>
            <person name="Miller B."/>
            <person name="Marra M.A."/>
            <person name="Martienssen R."/>
            <person name="McCombie W.R."/>
            <person name="Wilson R.K."/>
            <person name="Murphy G."/>
            <person name="Bancroft I."/>
            <person name="Volckaert G."/>
            <person name="Wambutt R."/>
            <person name="Duesterhoeft A."/>
            <person name="Stiekema W."/>
            <person name="Pohl T."/>
            <person name="Entian K.-D."/>
            <person name="Terryn N."/>
            <person name="Hartley N."/>
            <person name="Bent E."/>
            <person name="Johnson S."/>
            <person name="Langham S.-A."/>
            <person name="McCullagh B."/>
            <person name="Robben J."/>
            <person name="Grymonprez B."/>
            <person name="Zimmermann W."/>
            <person name="Ramsperger U."/>
            <person name="Wedler H."/>
            <person name="Balke K."/>
            <person name="Wedler E."/>
            <person name="Peters S."/>
            <person name="van Staveren M."/>
            <person name="Dirkse W."/>
            <person name="Mooijman P."/>
            <person name="Klein Lankhorst R."/>
            <person name="Weitzenegger T."/>
            <person name="Bothe G."/>
            <person name="Rose M."/>
            <person name="Hauf J."/>
            <person name="Berneiser S."/>
            <person name="Hempel S."/>
            <person name="Feldpausch M."/>
            <person name="Lamberth S."/>
            <person name="Villarroel R."/>
            <person name="Gielen J."/>
            <person name="Ardiles W."/>
            <person name="Bents O."/>
            <person name="Lemcke K."/>
            <person name="Kolesov G."/>
            <person name="Mayer K.F.X."/>
            <person name="Rudd S."/>
            <person name="Schoof H."/>
            <person name="Schueller C."/>
            <person name="Zaccaria P."/>
            <person name="Mewes H.-W."/>
            <person name="Bevan M."/>
            <person name="Fransz P.F."/>
        </authorList>
    </citation>
    <scope>NUCLEOTIDE SEQUENCE [LARGE SCALE GENOMIC DNA]</scope>
    <source>
        <strain>cv. Columbia</strain>
    </source>
</reference>
<reference key="3">
    <citation type="journal article" date="2017" name="Plant J.">
        <title>Araport11: a complete reannotation of the Arabidopsis thaliana reference genome.</title>
        <authorList>
            <person name="Cheng C.Y."/>
            <person name="Krishnakumar V."/>
            <person name="Chan A.P."/>
            <person name="Thibaud-Nissen F."/>
            <person name="Schobel S."/>
            <person name="Town C.D."/>
        </authorList>
    </citation>
    <scope>GENOME REANNOTATION</scope>
    <source>
        <strain>cv. Columbia</strain>
    </source>
</reference>
<reference key="4">
    <citation type="journal article" date="2003" name="Science">
        <title>Empirical analysis of transcriptional activity in the Arabidopsis genome.</title>
        <authorList>
            <person name="Yamada K."/>
            <person name="Lim J."/>
            <person name="Dale J.M."/>
            <person name="Chen H."/>
            <person name="Shinn P."/>
            <person name="Palm C.J."/>
            <person name="Southwick A.M."/>
            <person name="Wu H.C."/>
            <person name="Kim C.J."/>
            <person name="Nguyen M."/>
            <person name="Pham P.K."/>
            <person name="Cheuk R.F."/>
            <person name="Karlin-Newmann G."/>
            <person name="Liu S.X."/>
            <person name="Lam B."/>
            <person name="Sakano H."/>
            <person name="Wu T."/>
            <person name="Yu G."/>
            <person name="Miranda M."/>
            <person name="Quach H.L."/>
            <person name="Tripp M."/>
            <person name="Chang C.H."/>
            <person name="Lee J.M."/>
            <person name="Toriumi M.J."/>
            <person name="Chan M.M."/>
            <person name="Tang C.C."/>
            <person name="Onodera C.S."/>
            <person name="Deng J.M."/>
            <person name="Akiyama K."/>
            <person name="Ansari Y."/>
            <person name="Arakawa T."/>
            <person name="Banh J."/>
            <person name="Banno F."/>
            <person name="Bowser L."/>
            <person name="Brooks S.Y."/>
            <person name="Carninci P."/>
            <person name="Chao Q."/>
            <person name="Choy N."/>
            <person name="Enju A."/>
            <person name="Goldsmith A.D."/>
            <person name="Gurjal M."/>
            <person name="Hansen N.F."/>
            <person name="Hayashizaki Y."/>
            <person name="Johnson-Hopson C."/>
            <person name="Hsuan V.W."/>
            <person name="Iida K."/>
            <person name="Karnes M."/>
            <person name="Khan S."/>
            <person name="Koesema E."/>
            <person name="Ishida J."/>
            <person name="Jiang P.X."/>
            <person name="Jones T."/>
            <person name="Kawai J."/>
            <person name="Kamiya A."/>
            <person name="Meyers C."/>
            <person name="Nakajima M."/>
            <person name="Narusaka M."/>
            <person name="Seki M."/>
            <person name="Sakurai T."/>
            <person name="Satou M."/>
            <person name="Tamse R."/>
            <person name="Vaysberg M."/>
            <person name="Wallender E.K."/>
            <person name="Wong C."/>
            <person name="Yamamura Y."/>
            <person name="Yuan S."/>
            <person name="Shinozaki K."/>
            <person name="Davis R.W."/>
            <person name="Theologis A."/>
            <person name="Ecker J.R."/>
        </authorList>
    </citation>
    <scope>NUCLEOTIDE SEQUENCE [LARGE SCALE MRNA]</scope>
    <source>
        <strain>cv. Columbia</strain>
    </source>
</reference>
<reference key="5">
    <citation type="journal article" date="2007" name="Plant Physiol.">
        <title>The Arabidopsis BAP1 and BAP2 genes are general inhibitors of programmed cell death.</title>
        <authorList>
            <person name="Yang H."/>
            <person name="Yang S."/>
            <person name="Li Y."/>
            <person name="Hua J."/>
        </authorList>
    </citation>
    <scope>INTERACTION WITH BAP1 AND BAP2</scope>
</reference>